<keyword id="KW-1003">Cell membrane</keyword>
<keyword id="KW-0169">Cobalamin biosynthesis</keyword>
<keyword id="KW-0460">Magnesium</keyword>
<keyword id="KW-0472">Membrane</keyword>
<keyword id="KW-0808">Transferase</keyword>
<keyword id="KW-0812">Transmembrane</keyword>
<keyword id="KW-1133">Transmembrane helix</keyword>
<organism>
    <name type="scientific">Clostridium botulinum (strain Eklund 17B / Type B)</name>
    <dbReference type="NCBI Taxonomy" id="935198"/>
    <lineage>
        <taxon>Bacteria</taxon>
        <taxon>Bacillati</taxon>
        <taxon>Bacillota</taxon>
        <taxon>Clostridia</taxon>
        <taxon>Eubacteriales</taxon>
        <taxon>Clostridiaceae</taxon>
        <taxon>Clostridium</taxon>
    </lineage>
</organism>
<proteinExistence type="inferred from homology"/>
<name>COBS_CLOBB</name>
<dbReference type="EC" id="2.7.8.26" evidence="1"/>
<dbReference type="EMBL" id="CP001056">
    <property type="protein sequence ID" value="ACD23741.1"/>
    <property type="molecule type" value="Genomic_DNA"/>
</dbReference>
<dbReference type="KEGG" id="cbk:CLL_A2922"/>
<dbReference type="PATRIC" id="fig|935198.13.peg.2885"/>
<dbReference type="HOGENOM" id="CLU_057426_1_2_9"/>
<dbReference type="UniPathway" id="UPA00148">
    <property type="reaction ID" value="UER00238"/>
</dbReference>
<dbReference type="Proteomes" id="UP000001195">
    <property type="component" value="Chromosome"/>
</dbReference>
<dbReference type="GO" id="GO:0005886">
    <property type="term" value="C:plasma membrane"/>
    <property type="evidence" value="ECO:0007669"/>
    <property type="project" value="UniProtKB-SubCell"/>
</dbReference>
<dbReference type="GO" id="GO:0051073">
    <property type="term" value="F:adenosylcobinamide-GDP ribazoletransferase activity"/>
    <property type="evidence" value="ECO:0007669"/>
    <property type="project" value="UniProtKB-UniRule"/>
</dbReference>
<dbReference type="GO" id="GO:0008818">
    <property type="term" value="F:cobalamin 5'-phosphate synthase activity"/>
    <property type="evidence" value="ECO:0007669"/>
    <property type="project" value="UniProtKB-UniRule"/>
</dbReference>
<dbReference type="GO" id="GO:0009236">
    <property type="term" value="P:cobalamin biosynthetic process"/>
    <property type="evidence" value="ECO:0007669"/>
    <property type="project" value="UniProtKB-UniRule"/>
</dbReference>
<dbReference type="HAMAP" id="MF_00719">
    <property type="entry name" value="CobS"/>
    <property type="match status" value="1"/>
</dbReference>
<dbReference type="InterPro" id="IPR003805">
    <property type="entry name" value="CobS"/>
</dbReference>
<dbReference type="PANTHER" id="PTHR34148">
    <property type="entry name" value="ADENOSYLCOBINAMIDE-GDP RIBAZOLETRANSFERASE"/>
    <property type="match status" value="1"/>
</dbReference>
<dbReference type="PANTHER" id="PTHR34148:SF1">
    <property type="entry name" value="ADENOSYLCOBINAMIDE-GDP RIBAZOLETRANSFERASE"/>
    <property type="match status" value="1"/>
</dbReference>
<dbReference type="Pfam" id="PF02654">
    <property type="entry name" value="CobS"/>
    <property type="match status" value="1"/>
</dbReference>
<evidence type="ECO:0000255" key="1">
    <source>
        <dbReference type="HAMAP-Rule" id="MF_00719"/>
    </source>
</evidence>
<feature type="chain" id="PRO_1000132564" description="Adenosylcobinamide-GDP ribazoletransferase">
    <location>
        <begin position="1"/>
        <end position="252"/>
    </location>
</feature>
<feature type="transmembrane region" description="Helical" evidence="1">
    <location>
        <begin position="4"/>
        <end position="24"/>
    </location>
</feature>
<feature type="transmembrane region" description="Helical" evidence="1">
    <location>
        <begin position="38"/>
        <end position="58"/>
    </location>
</feature>
<feature type="transmembrane region" description="Helical" evidence="1">
    <location>
        <begin position="60"/>
        <end position="80"/>
    </location>
</feature>
<feature type="transmembrane region" description="Helical" evidence="1">
    <location>
        <begin position="113"/>
        <end position="133"/>
    </location>
</feature>
<feature type="transmembrane region" description="Helical" evidence="1">
    <location>
        <begin position="141"/>
        <end position="161"/>
    </location>
</feature>
<feature type="transmembrane region" description="Helical" evidence="1">
    <location>
        <begin position="190"/>
        <end position="210"/>
    </location>
</feature>
<feature type="transmembrane region" description="Helical" evidence="1">
    <location>
        <begin position="232"/>
        <end position="252"/>
    </location>
</feature>
<sequence>MKNLFKGLMMSLSMFTIIPMPYVEWDEDGAKNMMKCYPIIGLIVGCVWFLGYKLINYLNISIVLKSALIMIIPFIITGMLHLDGFMDVCDAILSRRDKEEKLRILKDSTTGAFSVISVIILFFIQFGAVHSFLEYNKNPYILMFLPIISRNIVAYFFITIITIKESTLGSYFTKGTNIKDKVILILELALVCILFGIILGYIGIVILLIVTVAISLCVKKCINEFGGISGDVAGFSLVVGELVGLFSACLFT</sequence>
<comment type="function">
    <text evidence="1">Joins adenosylcobinamide-GDP and alpha-ribazole to generate adenosylcobalamin (Ado-cobalamin). Also synthesizes adenosylcobalamin 5'-phosphate from adenosylcobinamide-GDP and alpha-ribazole 5'-phosphate.</text>
</comment>
<comment type="catalytic activity">
    <reaction evidence="1">
        <text>alpha-ribazole + adenosylcob(III)inamide-GDP = adenosylcob(III)alamin + GMP + H(+)</text>
        <dbReference type="Rhea" id="RHEA:16049"/>
        <dbReference type="ChEBI" id="CHEBI:10329"/>
        <dbReference type="ChEBI" id="CHEBI:15378"/>
        <dbReference type="ChEBI" id="CHEBI:18408"/>
        <dbReference type="ChEBI" id="CHEBI:58115"/>
        <dbReference type="ChEBI" id="CHEBI:60487"/>
        <dbReference type="EC" id="2.7.8.26"/>
    </reaction>
</comment>
<comment type="catalytic activity">
    <reaction evidence="1">
        <text>alpha-ribazole 5'-phosphate + adenosylcob(III)inamide-GDP = adenosylcob(III)alamin 5'-phosphate + GMP + H(+)</text>
        <dbReference type="Rhea" id="RHEA:23560"/>
        <dbReference type="ChEBI" id="CHEBI:15378"/>
        <dbReference type="ChEBI" id="CHEBI:57918"/>
        <dbReference type="ChEBI" id="CHEBI:58115"/>
        <dbReference type="ChEBI" id="CHEBI:60487"/>
        <dbReference type="ChEBI" id="CHEBI:60493"/>
        <dbReference type="EC" id="2.7.8.26"/>
    </reaction>
</comment>
<comment type="cofactor">
    <cofactor evidence="1">
        <name>Mg(2+)</name>
        <dbReference type="ChEBI" id="CHEBI:18420"/>
    </cofactor>
</comment>
<comment type="pathway">
    <text evidence="1">Cofactor biosynthesis; adenosylcobalamin biosynthesis; adenosylcobalamin from cob(II)yrinate a,c-diamide: step 7/7.</text>
</comment>
<comment type="subcellular location">
    <subcellularLocation>
        <location evidence="1">Cell membrane</location>
        <topology evidence="1">Multi-pass membrane protein</topology>
    </subcellularLocation>
</comment>
<comment type="similarity">
    <text evidence="1">Belongs to the CobS family.</text>
</comment>
<gene>
    <name evidence="1" type="primary">cobS</name>
    <name type="ordered locus">CLL_A2922</name>
</gene>
<reference key="1">
    <citation type="submission" date="2008-04" db="EMBL/GenBank/DDBJ databases">
        <title>Complete sequence of Clostridium botulinum strain Eklund.</title>
        <authorList>
            <person name="Brinkac L.M."/>
            <person name="Brown J.L."/>
            <person name="Bruce D."/>
            <person name="Detter C."/>
            <person name="Munk C."/>
            <person name="Smith L.A."/>
            <person name="Smith T.J."/>
            <person name="Sutton G."/>
            <person name="Brettin T.S."/>
        </authorList>
    </citation>
    <scope>NUCLEOTIDE SEQUENCE [LARGE SCALE GENOMIC DNA]</scope>
    <source>
        <strain>Eklund 17B / Type B</strain>
    </source>
</reference>
<protein>
    <recommendedName>
        <fullName evidence="1">Adenosylcobinamide-GDP ribazoletransferase</fullName>
        <ecNumber evidence="1">2.7.8.26</ecNumber>
    </recommendedName>
    <alternativeName>
        <fullName evidence="1">Cobalamin synthase</fullName>
    </alternativeName>
    <alternativeName>
        <fullName evidence="1">Cobalamin-5'-phosphate synthase</fullName>
    </alternativeName>
</protein>
<accession>B2TPF2</accession>